<comment type="function">
    <text evidence="5">Scaffolding protein in the dendritic spines which acts as immobile postsynaptic posts able to recruit KIF1A-driven dense core vesicles to dendritic spines.</text>
</comment>
<comment type="subunit">
    <text evidence="5">Interacts with KIF1A; the interaction decreases in presence of calcium.</text>
</comment>
<comment type="subcellular location">
    <subcellularLocation>
        <location evidence="5">Cell projection</location>
        <location evidence="5">Dendritic spine</location>
    </subcellularLocation>
</comment>
<comment type="alternative products">
    <event type="alternative splicing"/>
    <isoform>
        <id>Q9HCD6-1</id>
        <name>1</name>
        <sequence type="displayed"/>
    </isoform>
    <isoform>
        <id>Q9HCD6-2</id>
        <name>2</name>
        <sequence type="described" ref="VSP_033550"/>
    </isoform>
    <isoform>
        <id>Q9HCD6-3</id>
        <name>3</name>
        <sequence type="described" ref="VSP_033546 VSP_033547"/>
    </isoform>
    <isoform>
        <id>Q9HCD6-4</id>
        <name>4</name>
        <sequence type="described" ref="VSP_033548 VSP_033549"/>
    </isoform>
</comment>
<comment type="disease" evidence="3 5 6">
    <disease id="DI-05852">
        <name>Intellectual developmental disorder with autistic features and language delay, with or without seizures</name>
        <acronym>IDDALDS</acronym>
        <description>An autosomal dominant neurodevelopmental disorder characterized by global developmental delay, varying degrees of intellectual disability, autism spectrum disorder, and delayed language. Some patients develop seizures.</description>
        <dbReference type="MIM" id="618906"/>
    </disease>
    <text>The disease is caused by variants affecting the gene represented in this entry.</text>
</comment>
<comment type="disease">
    <text evidence="4">Defects in TANC2 has been found in a patient with isolated coloboma, a defect of the eye characterized by the absence of ocular structures due to abnormal morphogenesis of the optic cup and stalk, and the fusion of the fetal fissure (optic fissure). Isolated colobomas may be associated with an abnormally small eye (microphthalmia) or small cornea.</text>
</comment>
<comment type="similarity">
    <text evidence="9">Belongs to the TANC family.</text>
</comment>
<comment type="sequence caution" evidence="9">
    <conflict type="erroneous initiation">
        <sequence resource="EMBL-CDS" id="CAB92314"/>
    </conflict>
    <text>Truncated N-terminus.</text>
</comment>
<comment type="sequence caution" evidence="9">
    <conflict type="frameshift">
        <sequence resource="EMBL-CDS" id="CAB92314"/>
    </conflict>
</comment>
<comment type="sequence caution" evidence="9">
    <molecule>Isoform 2</molecule>
    <conflict type="frameshift">
        <sequence resource="EMBL-CDS" id="CAB92314"/>
    </conflict>
</comment>
<keyword id="KW-0025">Alternative splicing</keyword>
<keyword id="KW-0040">ANK repeat</keyword>
<keyword id="KW-1268">Autism spectrum disorder</keyword>
<keyword id="KW-0966">Cell projection</keyword>
<keyword id="KW-0225">Disease variant</keyword>
<keyword id="KW-0325">Glycoprotein</keyword>
<keyword id="KW-0991">Intellectual disability</keyword>
<keyword id="KW-0488">Methylation</keyword>
<keyword id="KW-0597">Phosphoprotein</keyword>
<keyword id="KW-1267">Proteomics identification</keyword>
<keyword id="KW-1185">Reference proteome</keyword>
<keyword id="KW-0677">Repeat</keyword>
<keyword id="KW-0770">Synapse</keyword>
<keyword id="KW-0802">TPR repeat</keyword>
<dbReference type="EMBL" id="AC005828">
    <property type="status" value="NOT_ANNOTATED_CDS"/>
    <property type="molecule type" value="Genomic_DNA"/>
</dbReference>
<dbReference type="EMBL" id="AC005972">
    <property type="status" value="NOT_ANNOTATED_CDS"/>
    <property type="molecule type" value="Genomic_DNA"/>
</dbReference>
<dbReference type="EMBL" id="AC006270">
    <property type="status" value="NOT_ANNOTATED_CDS"/>
    <property type="molecule type" value="Genomic_DNA"/>
</dbReference>
<dbReference type="EMBL" id="AC015923">
    <property type="status" value="NOT_ANNOTATED_CDS"/>
    <property type="molecule type" value="Genomic_DNA"/>
</dbReference>
<dbReference type="EMBL" id="AB046856">
    <property type="protein sequence ID" value="BAB13462.2"/>
    <property type="molecule type" value="mRNA"/>
</dbReference>
<dbReference type="EMBL" id="AK001077">
    <property type="status" value="NOT_ANNOTATED_CDS"/>
    <property type="molecule type" value="mRNA"/>
</dbReference>
<dbReference type="EMBL" id="AK021886">
    <property type="status" value="NOT_ANNOTATED_CDS"/>
    <property type="molecule type" value="mRNA"/>
</dbReference>
<dbReference type="EMBL" id="AJ278120">
    <property type="protein sequence ID" value="CAB92314.1"/>
    <property type="status" value="ALT_SEQ"/>
    <property type="molecule type" value="mRNA"/>
</dbReference>
<dbReference type="EMBL" id="AB032974">
    <property type="protein sequence ID" value="BAA86462.2"/>
    <property type="molecule type" value="mRNA"/>
</dbReference>
<dbReference type="CCDS" id="CCDS45754.1">
    <molecule id="Q9HCD6-1"/>
</dbReference>
<dbReference type="CCDS" id="CCDS92375.1">
    <molecule id="Q9HCD6-2"/>
</dbReference>
<dbReference type="RefSeq" id="NP_001398005.1">
    <molecule id="Q9HCD6-2"/>
    <property type="nucleotide sequence ID" value="NM_001411076.1"/>
</dbReference>
<dbReference type="RefSeq" id="NP_079461.2">
    <molecule id="Q9HCD6-1"/>
    <property type="nucleotide sequence ID" value="NM_025185.3"/>
</dbReference>
<dbReference type="RefSeq" id="XP_005257260.1">
    <property type="nucleotide sequence ID" value="XM_005257203.4"/>
</dbReference>
<dbReference type="SMR" id="Q9HCD6"/>
<dbReference type="BioGRID" id="117559">
    <property type="interactions" value="84"/>
</dbReference>
<dbReference type="FunCoup" id="Q9HCD6">
    <property type="interactions" value="304"/>
</dbReference>
<dbReference type="IntAct" id="Q9HCD6">
    <property type="interactions" value="48"/>
</dbReference>
<dbReference type="MINT" id="Q9HCD6"/>
<dbReference type="STRING" id="9606.ENSP00000387593"/>
<dbReference type="GlyCosmos" id="Q9HCD6">
    <property type="glycosylation" value="6 sites, 1 glycan"/>
</dbReference>
<dbReference type="GlyGen" id="Q9HCD6">
    <property type="glycosylation" value="13 sites, 1 O-linked glycan (11 sites)"/>
</dbReference>
<dbReference type="iPTMnet" id="Q9HCD6"/>
<dbReference type="PhosphoSitePlus" id="Q9HCD6"/>
<dbReference type="SwissPalm" id="Q9HCD6"/>
<dbReference type="BioMuta" id="TANC2"/>
<dbReference type="DMDM" id="189029946"/>
<dbReference type="jPOST" id="Q9HCD6"/>
<dbReference type="MassIVE" id="Q9HCD6"/>
<dbReference type="PaxDb" id="9606-ENSP00000387593"/>
<dbReference type="PeptideAtlas" id="Q9HCD6"/>
<dbReference type="ProteomicsDB" id="81677">
    <molecule id="Q9HCD6-1"/>
</dbReference>
<dbReference type="ProteomicsDB" id="81678">
    <molecule id="Q9HCD6-2"/>
</dbReference>
<dbReference type="ProteomicsDB" id="81679">
    <molecule id="Q9HCD6-3"/>
</dbReference>
<dbReference type="ProteomicsDB" id="81680">
    <molecule id="Q9HCD6-4"/>
</dbReference>
<dbReference type="Pumba" id="Q9HCD6"/>
<dbReference type="Antibodypedia" id="9399">
    <property type="antibodies" value="14 antibodies from 9 providers"/>
</dbReference>
<dbReference type="DNASU" id="26115"/>
<dbReference type="Ensembl" id="ENST00000389520.8">
    <molecule id="Q9HCD6-2"/>
    <property type="protein sequence ID" value="ENSP00000374171.4"/>
    <property type="gene ID" value="ENSG00000170921.16"/>
</dbReference>
<dbReference type="Ensembl" id="ENST00000424789.6">
    <molecule id="Q9HCD6-1"/>
    <property type="protein sequence ID" value="ENSP00000387593.2"/>
    <property type="gene ID" value="ENSG00000170921.16"/>
</dbReference>
<dbReference type="GeneID" id="26115"/>
<dbReference type="KEGG" id="hsa:26115"/>
<dbReference type="UCSC" id="uc002jal.5">
    <molecule id="Q9HCD6-1"/>
    <property type="organism name" value="human"/>
</dbReference>
<dbReference type="AGR" id="HGNC:30212"/>
<dbReference type="CTD" id="26115"/>
<dbReference type="DisGeNET" id="26115"/>
<dbReference type="GeneCards" id="TANC2"/>
<dbReference type="HGNC" id="HGNC:30212">
    <property type="gene designation" value="TANC2"/>
</dbReference>
<dbReference type="HPA" id="ENSG00000170921">
    <property type="expression patterns" value="Tissue enhanced (parathyroid)"/>
</dbReference>
<dbReference type="MalaCards" id="TANC2"/>
<dbReference type="MIM" id="615047">
    <property type="type" value="gene"/>
</dbReference>
<dbReference type="MIM" id="618906">
    <property type="type" value="phenotype"/>
</dbReference>
<dbReference type="neXtProt" id="NX_Q9HCD6"/>
<dbReference type="OpenTargets" id="ENSG00000170921"/>
<dbReference type="Orphanet" id="528084">
    <property type="disease" value="Non-specific syndromic intellectual disability"/>
</dbReference>
<dbReference type="PharmGKB" id="PA142670837"/>
<dbReference type="VEuPathDB" id="HostDB:ENSG00000170921"/>
<dbReference type="eggNOG" id="KOG0504">
    <property type="taxonomic scope" value="Eukaryota"/>
</dbReference>
<dbReference type="GeneTree" id="ENSGT00940000156447"/>
<dbReference type="HOGENOM" id="CLU_001464_0_1_1"/>
<dbReference type="InParanoid" id="Q9HCD6"/>
<dbReference type="OMA" id="MTQRPYQ"/>
<dbReference type="OrthoDB" id="5958958at2759"/>
<dbReference type="PAN-GO" id="Q9HCD6">
    <property type="GO annotations" value="2 GO annotations based on evolutionary models"/>
</dbReference>
<dbReference type="PhylomeDB" id="Q9HCD6"/>
<dbReference type="TreeFam" id="TF323159"/>
<dbReference type="PathwayCommons" id="Q9HCD6"/>
<dbReference type="SignaLink" id="Q9HCD6"/>
<dbReference type="SIGNOR" id="Q9HCD6"/>
<dbReference type="BioGRID-ORCS" id="26115">
    <property type="hits" value="13 hits in 1153 CRISPR screens"/>
</dbReference>
<dbReference type="ChiTaRS" id="TANC2">
    <property type="organism name" value="human"/>
</dbReference>
<dbReference type="GenomeRNAi" id="26115"/>
<dbReference type="Pharos" id="Q9HCD6">
    <property type="development level" value="Tdark"/>
</dbReference>
<dbReference type="PRO" id="PR:Q9HCD6"/>
<dbReference type="Proteomes" id="UP000005640">
    <property type="component" value="Chromosome 17"/>
</dbReference>
<dbReference type="RNAct" id="Q9HCD6">
    <property type="molecule type" value="protein"/>
</dbReference>
<dbReference type="Bgee" id="ENSG00000170921">
    <property type="expression patterns" value="Expressed in cortical plate and 166 other cell types or tissues"/>
</dbReference>
<dbReference type="ExpressionAtlas" id="Q9HCD6">
    <property type="expression patterns" value="baseline and differential"/>
</dbReference>
<dbReference type="GO" id="GO:0030424">
    <property type="term" value="C:axon"/>
    <property type="evidence" value="ECO:0007669"/>
    <property type="project" value="GOC"/>
</dbReference>
<dbReference type="GO" id="GO:0043197">
    <property type="term" value="C:dendritic spine"/>
    <property type="evidence" value="ECO:0000314"/>
    <property type="project" value="UniProtKB"/>
</dbReference>
<dbReference type="GO" id="GO:0099519">
    <property type="term" value="P:dense core granule cytoskeletal transport"/>
    <property type="evidence" value="ECO:0000250"/>
    <property type="project" value="UniProtKB"/>
</dbReference>
<dbReference type="GO" id="GO:0060998">
    <property type="term" value="P:regulation of dendritic spine development"/>
    <property type="evidence" value="ECO:0000250"/>
    <property type="project" value="UniProtKB"/>
</dbReference>
<dbReference type="GO" id="GO:0061001">
    <property type="term" value="P:regulation of dendritic spine morphogenesis"/>
    <property type="evidence" value="ECO:0000250"/>
    <property type="project" value="UniProtKB"/>
</dbReference>
<dbReference type="FunFam" id="1.25.40.20:FF:000022">
    <property type="entry name" value="protein TANC2 isoform X1"/>
    <property type="match status" value="1"/>
</dbReference>
<dbReference type="FunFam" id="1.25.40.20:FF:000036">
    <property type="entry name" value="protein TANC2 isoform X2"/>
    <property type="match status" value="1"/>
</dbReference>
<dbReference type="FunFam" id="1.25.40.10:FF:000044">
    <property type="entry name" value="Tetratricopeptide repeat, ankyrin repeat and coiled-coil containing 1"/>
    <property type="match status" value="1"/>
</dbReference>
<dbReference type="Gene3D" id="1.25.40.20">
    <property type="entry name" value="Ankyrin repeat-containing domain"/>
    <property type="match status" value="2"/>
</dbReference>
<dbReference type="Gene3D" id="1.25.40.10">
    <property type="entry name" value="Tetratricopeptide repeat domain"/>
    <property type="match status" value="1"/>
</dbReference>
<dbReference type="InterPro" id="IPR002110">
    <property type="entry name" value="Ankyrin_rpt"/>
</dbReference>
<dbReference type="InterPro" id="IPR036770">
    <property type="entry name" value="Ankyrin_rpt-contain_sf"/>
</dbReference>
<dbReference type="InterPro" id="IPR050889">
    <property type="entry name" value="Dendritic_Spine_Reg/Scaffold"/>
</dbReference>
<dbReference type="InterPro" id="IPR027417">
    <property type="entry name" value="P-loop_NTPase"/>
</dbReference>
<dbReference type="InterPro" id="IPR011990">
    <property type="entry name" value="TPR-like_helical_dom_sf"/>
</dbReference>
<dbReference type="InterPro" id="IPR019734">
    <property type="entry name" value="TPR_rpt"/>
</dbReference>
<dbReference type="PANTHER" id="PTHR24166:SF21">
    <property type="entry name" value="PROTEIN TANC2"/>
    <property type="match status" value="1"/>
</dbReference>
<dbReference type="PANTHER" id="PTHR24166">
    <property type="entry name" value="ROLLING PEBBLES, ISOFORM B"/>
    <property type="match status" value="1"/>
</dbReference>
<dbReference type="Pfam" id="PF12796">
    <property type="entry name" value="Ank_2"/>
    <property type="match status" value="3"/>
</dbReference>
<dbReference type="Pfam" id="PF13637">
    <property type="entry name" value="Ank_4"/>
    <property type="match status" value="1"/>
</dbReference>
<dbReference type="Pfam" id="PF13181">
    <property type="entry name" value="TPR_8"/>
    <property type="match status" value="2"/>
</dbReference>
<dbReference type="PRINTS" id="PR01415">
    <property type="entry name" value="ANKYRIN"/>
</dbReference>
<dbReference type="SMART" id="SM00248">
    <property type="entry name" value="ANK"/>
    <property type="match status" value="11"/>
</dbReference>
<dbReference type="SMART" id="SM00028">
    <property type="entry name" value="TPR"/>
    <property type="match status" value="3"/>
</dbReference>
<dbReference type="SUPFAM" id="SSF48403">
    <property type="entry name" value="Ankyrin repeat"/>
    <property type="match status" value="1"/>
</dbReference>
<dbReference type="SUPFAM" id="SSF52540">
    <property type="entry name" value="P-loop containing nucleoside triphosphate hydrolases"/>
    <property type="match status" value="1"/>
</dbReference>
<dbReference type="SUPFAM" id="SSF48452">
    <property type="entry name" value="TPR-like"/>
    <property type="match status" value="1"/>
</dbReference>
<dbReference type="PROSITE" id="PS50297">
    <property type="entry name" value="ANK_REP_REGION"/>
    <property type="match status" value="1"/>
</dbReference>
<dbReference type="PROSITE" id="PS50088">
    <property type="entry name" value="ANK_REPEAT"/>
    <property type="match status" value="6"/>
</dbReference>
<dbReference type="PROSITE" id="PS50005">
    <property type="entry name" value="TPR"/>
    <property type="match status" value="3"/>
</dbReference>
<dbReference type="PROSITE" id="PS50293">
    <property type="entry name" value="TPR_REGION"/>
    <property type="match status" value="1"/>
</dbReference>
<evidence type="ECO:0000250" key="1">
    <source>
        <dbReference type="UniProtKB" id="A2A690"/>
    </source>
</evidence>
<evidence type="ECO:0000256" key="2">
    <source>
        <dbReference type="SAM" id="MobiDB-lite"/>
    </source>
</evidence>
<evidence type="ECO:0000269" key="3">
    <source>
    </source>
</evidence>
<evidence type="ECO:0000269" key="4">
    <source>
    </source>
</evidence>
<evidence type="ECO:0000269" key="5">
    <source>
    </source>
</evidence>
<evidence type="ECO:0000269" key="6">
    <source>
    </source>
</evidence>
<evidence type="ECO:0000303" key="7">
    <source>
    </source>
</evidence>
<evidence type="ECO:0000303" key="8">
    <source ref="4"/>
</evidence>
<evidence type="ECO:0000305" key="9"/>
<evidence type="ECO:0007744" key="10">
    <source>
    </source>
</evidence>
<evidence type="ECO:0007744" key="11">
    <source>
    </source>
</evidence>
<name>TANC2_HUMAN</name>
<organism>
    <name type="scientific">Homo sapiens</name>
    <name type="common">Human</name>
    <dbReference type="NCBI Taxonomy" id="9606"/>
    <lineage>
        <taxon>Eukaryota</taxon>
        <taxon>Metazoa</taxon>
        <taxon>Chordata</taxon>
        <taxon>Craniata</taxon>
        <taxon>Vertebrata</taxon>
        <taxon>Euteleostomi</taxon>
        <taxon>Mammalia</taxon>
        <taxon>Eutheria</taxon>
        <taxon>Euarchontoglires</taxon>
        <taxon>Primates</taxon>
        <taxon>Haplorrhini</taxon>
        <taxon>Catarrhini</taxon>
        <taxon>Hominidae</taxon>
        <taxon>Homo</taxon>
    </lineage>
</organism>
<sequence>MFRNSLKMLLTGGKSSRKNRSSDGGSEEPPDRRQSSVDSRQSRSGQGGISTESDCAFEPDYAVPPLPVSEGDAEQELGPPPSVDEAANTLMTRLGFLLGEKVTEVQPGDQYSMEVQDENQTSAITQRISPCSTLTSSTASPPASSPCSTLPPISTNATAKDCSYGAVTSPTSTLESRDSGIIATLTSYSENVERTKYAGESSKELGSGGNIKPWQSQKSSMDSCLYRVDENMTASTYSLNKIPERNLETVLSQSVQSIPLYLMPRPNSVAATSSAHLEDLAYLDEQRHTPLRTSLRMPRQSMGGARTQQDLRVRFAPYRPPDISLKPLLFEVPSITTESVFVGRDWVFHEIDAQLQSSNASVNQGVVIVGNIGFGKTAIISRLVALSCHGTRMRQIASDSPHASPKHVDANRELPLTQPPSAHSSITSGSCPGTPEMRRRQEEAMRRLASQVVAYHYCQADNAYTCLVPEFVHNVAALLCRSPQLTAYREQLLREPHLQSMLSLRSCVQDPMASFRRGVLEPLENLHKERKIPDEDFIILIDGLNEAEFHKPDYGDTIVSFLSKMIGKFPSWLKLIVTVRTSLQEITKLLPFHRIFLDRLEENEAIDQDLQAYILHRIHSSSEIQNNISLNGKMDNTTFGKLSSHLKTLSQGSYLYLKLTFDLIEKGYLVLKSSSYKVVPVSLSEVYLLQCNMKFPTQSSFDRVMPLLNVAVASLHPLTDEHIFQAINAGSIEGTLEWEDFQQRMENLSMFLIKRRDMTRMFVHPSFREWLIWREEGEKTKFLCDPRSGHTLLAFWFSRQEGKLNRQQTIELGHHILKAHIFKGLSKKVGVSSSILQGLWISYSTEGLSMALASLRNLYTPNIKVSRLLILGGANINYRTEVLNNAPILCVQSHLGYTEMVALLLEFGANVDASSESGLTPLGYAAAAGYLSIVVLLCKKRAKVDHLDKNGQCALVHAALRGHLEVVKFLIQCDWTMAGQQQGVFKKSHAIQQALIAAASMGYTEIVSYLLDLPEKDEEEVERAQINSFDSLWGETALTAAAGRGKLEVCRLLLEQGAAVAQPNRRGAVPLFSTVRQGHWQIVDLLLTHGADVNMADKQGRTPLMMAASEGHLGTVDFLLAQGASIALMDKEGLTALSWACLKGHLSVVRSLVDNGAATDHADKNGRTPLDLAAFYGDAEVVQFLVDHGAMIEHVDYSGMRPLDRAVGCRNTSVVVTLLKKGAKIGPATWAMATSKPDIMIILLSKLMEEGDMFYKKGKVKEAAQRYQYALKKFPREGFGEDLKTFRELKVSLLLNLSRCRRKMNDFGMAEEFATKALELKPKSYEAYYARARAKRSSRQFAAALEDLNEAIKLCPNNREIQRLLLRVEEECRQMQQPQQPPPPPQPQQQLPEEAEPEPQHEDIYSVQDIFEEEYLEQDVENVSIGLQTEARPSQGLPVIQSPPSSPPHRDSAYISSSPLGSHQVFDFRSSSSVGSPTRQTYQSTSPALSPTHQNSHYRPSPPHTSPAHQGGSYRFSPPPVGGQGKEYPSPPPSPLRRGPQYRASPPAESMSVYRSQSGSPVRYQQETSVSQLPGRPKSPLSKMAQRPYQMPQLPVAVPQQGLRLQPAKAQIVRSNQPSPAVHSSTVIPTGAYGQVAHSMASKYQSSQGDIGVSQSRLVYQGSIGGIVGDGRPVQHVQASLSAGAICQHGGLTKEDLPQRPSSAYRGGVRYSQTPQIGRSQSASYYPVCHSKLDLERSSSQLGSPDVSHLIRRPISVNPNEIKPHPPTPRPLLHSQSVGLRFSPSSNSISSTSNLTPTFRPSSSIQQMEIPLKPAYERSCDELSPVSPTQGGYPSEPTRSRTTPFMGIIDKTARTQQYPHLHQQNRTWAVSSVDTVLSPTSPGNLPQPESFSPPSSISNIAFYNKTNNAQNGHLLEDDYYSPHGMLANGSRGDLLERVSQASSYPDVKVARTLPVAQAYQDNLYRQLSRDSRQGQTSPIKPKRPFVESNV</sequence>
<reference key="1">
    <citation type="journal article" date="2006" name="Nature">
        <title>DNA sequence of human chromosome 17 and analysis of rearrangement in the human lineage.</title>
        <authorList>
            <person name="Zody M.C."/>
            <person name="Garber M."/>
            <person name="Adams D.J."/>
            <person name="Sharpe T."/>
            <person name="Harrow J."/>
            <person name="Lupski J.R."/>
            <person name="Nicholson C."/>
            <person name="Searle S.M."/>
            <person name="Wilming L."/>
            <person name="Young S.K."/>
            <person name="Abouelleil A."/>
            <person name="Allen N.R."/>
            <person name="Bi W."/>
            <person name="Bloom T."/>
            <person name="Borowsky M.L."/>
            <person name="Bugalter B.E."/>
            <person name="Butler J."/>
            <person name="Chang J.L."/>
            <person name="Chen C.-K."/>
            <person name="Cook A."/>
            <person name="Corum B."/>
            <person name="Cuomo C.A."/>
            <person name="de Jong P.J."/>
            <person name="DeCaprio D."/>
            <person name="Dewar K."/>
            <person name="FitzGerald M."/>
            <person name="Gilbert J."/>
            <person name="Gibson R."/>
            <person name="Gnerre S."/>
            <person name="Goldstein S."/>
            <person name="Grafham D.V."/>
            <person name="Grocock R."/>
            <person name="Hafez N."/>
            <person name="Hagopian D.S."/>
            <person name="Hart E."/>
            <person name="Norman C.H."/>
            <person name="Humphray S."/>
            <person name="Jaffe D.B."/>
            <person name="Jones M."/>
            <person name="Kamal M."/>
            <person name="Khodiyar V.K."/>
            <person name="LaButti K."/>
            <person name="Laird G."/>
            <person name="Lehoczky J."/>
            <person name="Liu X."/>
            <person name="Lokyitsang T."/>
            <person name="Loveland J."/>
            <person name="Lui A."/>
            <person name="Macdonald P."/>
            <person name="Major J.E."/>
            <person name="Matthews L."/>
            <person name="Mauceli E."/>
            <person name="McCarroll S.A."/>
            <person name="Mihalev A.H."/>
            <person name="Mudge J."/>
            <person name="Nguyen C."/>
            <person name="Nicol R."/>
            <person name="O'Leary S.B."/>
            <person name="Osoegawa K."/>
            <person name="Schwartz D.C."/>
            <person name="Shaw-Smith C."/>
            <person name="Stankiewicz P."/>
            <person name="Steward C."/>
            <person name="Swarbreck D."/>
            <person name="Venkataraman V."/>
            <person name="Whittaker C.A."/>
            <person name="Yang X."/>
            <person name="Zimmer A.R."/>
            <person name="Bradley A."/>
            <person name="Hubbard T."/>
            <person name="Birren B.W."/>
            <person name="Rogers J."/>
            <person name="Lander E.S."/>
            <person name="Nusbaum C."/>
        </authorList>
    </citation>
    <scope>NUCLEOTIDE SEQUENCE [LARGE SCALE GENOMIC DNA]</scope>
</reference>
<reference key="2">
    <citation type="journal article" date="2000" name="DNA Res.">
        <title>Prediction of the coding sequences of unidentified human genes. XVIII. The complete sequences of 100 new cDNA clones from brain which code for large proteins in vitro.</title>
        <authorList>
            <person name="Nagase T."/>
            <person name="Kikuno R."/>
            <person name="Nakayama M."/>
            <person name="Hirosawa M."/>
            <person name="Ohara O."/>
        </authorList>
    </citation>
    <scope>NUCLEOTIDE SEQUENCE [LARGE SCALE MRNA] OF 127-1990 (ISOFORM 1)</scope>
    <source>
        <tissue>Brain</tissue>
    </source>
</reference>
<reference key="3">
    <citation type="journal article" date="2004" name="Nat. Genet.">
        <title>Complete sequencing and characterization of 21,243 full-length human cDNAs.</title>
        <authorList>
            <person name="Ota T."/>
            <person name="Suzuki Y."/>
            <person name="Nishikawa T."/>
            <person name="Otsuki T."/>
            <person name="Sugiyama T."/>
            <person name="Irie R."/>
            <person name="Wakamatsu A."/>
            <person name="Hayashi K."/>
            <person name="Sato H."/>
            <person name="Nagai K."/>
            <person name="Kimura K."/>
            <person name="Makita H."/>
            <person name="Sekine M."/>
            <person name="Obayashi M."/>
            <person name="Nishi T."/>
            <person name="Shibahara T."/>
            <person name="Tanaka T."/>
            <person name="Ishii S."/>
            <person name="Yamamoto J."/>
            <person name="Saito K."/>
            <person name="Kawai Y."/>
            <person name="Isono Y."/>
            <person name="Nakamura Y."/>
            <person name="Nagahari K."/>
            <person name="Murakami K."/>
            <person name="Yasuda T."/>
            <person name="Iwayanagi T."/>
            <person name="Wagatsuma M."/>
            <person name="Shiratori A."/>
            <person name="Sudo H."/>
            <person name="Hosoiri T."/>
            <person name="Kaku Y."/>
            <person name="Kodaira H."/>
            <person name="Kondo H."/>
            <person name="Sugawara M."/>
            <person name="Takahashi M."/>
            <person name="Kanda K."/>
            <person name="Yokoi T."/>
            <person name="Furuya T."/>
            <person name="Kikkawa E."/>
            <person name="Omura Y."/>
            <person name="Abe K."/>
            <person name="Kamihara K."/>
            <person name="Katsuta N."/>
            <person name="Sato K."/>
            <person name="Tanikawa M."/>
            <person name="Yamazaki M."/>
            <person name="Ninomiya K."/>
            <person name="Ishibashi T."/>
            <person name="Yamashita H."/>
            <person name="Murakawa K."/>
            <person name="Fujimori K."/>
            <person name="Tanai H."/>
            <person name="Kimata M."/>
            <person name="Watanabe M."/>
            <person name="Hiraoka S."/>
            <person name="Chiba Y."/>
            <person name="Ishida S."/>
            <person name="Ono Y."/>
            <person name="Takiguchi S."/>
            <person name="Watanabe S."/>
            <person name="Yosida M."/>
            <person name="Hotuta T."/>
            <person name="Kusano J."/>
            <person name="Kanehori K."/>
            <person name="Takahashi-Fujii A."/>
            <person name="Hara H."/>
            <person name="Tanase T.-O."/>
            <person name="Nomura Y."/>
            <person name="Togiya S."/>
            <person name="Komai F."/>
            <person name="Hara R."/>
            <person name="Takeuchi K."/>
            <person name="Arita M."/>
            <person name="Imose N."/>
            <person name="Musashino K."/>
            <person name="Yuuki H."/>
            <person name="Oshima A."/>
            <person name="Sasaki N."/>
            <person name="Aotsuka S."/>
            <person name="Yoshikawa Y."/>
            <person name="Matsunawa H."/>
            <person name="Ichihara T."/>
            <person name="Shiohata N."/>
            <person name="Sano S."/>
            <person name="Moriya S."/>
            <person name="Momiyama H."/>
            <person name="Satoh N."/>
            <person name="Takami S."/>
            <person name="Terashima Y."/>
            <person name="Suzuki O."/>
            <person name="Nakagawa S."/>
            <person name="Senoh A."/>
            <person name="Mizoguchi H."/>
            <person name="Goto Y."/>
            <person name="Shimizu F."/>
            <person name="Wakebe H."/>
            <person name="Hishigaki H."/>
            <person name="Watanabe T."/>
            <person name="Sugiyama A."/>
            <person name="Takemoto M."/>
            <person name="Kawakami B."/>
            <person name="Yamazaki M."/>
            <person name="Watanabe K."/>
            <person name="Kumagai A."/>
            <person name="Itakura S."/>
            <person name="Fukuzumi Y."/>
            <person name="Fujimori Y."/>
            <person name="Komiyama M."/>
            <person name="Tashiro H."/>
            <person name="Tanigami A."/>
            <person name="Fujiwara T."/>
            <person name="Ono T."/>
            <person name="Yamada K."/>
            <person name="Fujii Y."/>
            <person name="Ozaki K."/>
            <person name="Hirao M."/>
            <person name="Ohmori Y."/>
            <person name="Kawabata A."/>
            <person name="Hikiji T."/>
            <person name="Kobatake N."/>
            <person name="Inagaki H."/>
            <person name="Ikema Y."/>
            <person name="Okamoto S."/>
            <person name="Okitani R."/>
            <person name="Kawakami T."/>
            <person name="Noguchi S."/>
            <person name="Itoh T."/>
            <person name="Shigeta K."/>
            <person name="Senba T."/>
            <person name="Matsumura K."/>
            <person name="Nakajima Y."/>
            <person name="Mizuno T."/>
            <person name="Morinaga M."/>
            <person name="Sasaki M."/>
            <person name="Togashi T."/>
            <person name="Oyama M."/>
            <person name="Hata H."/>
            <person name="Watanabe M."/>
            <person name="Komatsu T."/>
            <person name="Mizushima-Sugano J."/>
            <person name="Satoh T."/>
            <person name="Shirai Y."/>
            <person name="Takahashi Y."/>
            <person name="Nakagawa K."/>
            <person name="Okumura K."/>
            <person name="Nagase T."/>
            <person name="Nomura N."/>
            <person name="Kikuchi H."/>
            <person name="Masuho Y."/>
            <person name="Yamashita R."/>
            <person name="Nakai K."/>
            <person name="Yada T."/>
            <person name="Nakamura Y."/>
            <person name="Ohara O."/>
            <person name="Isogai T."/>
            <person name="Sugano S."/>
        </authorList>
    </citation>
    <scope>NUCLEOTIDE SEQUENCE [LARGE SCALE MRNA] OF 676-1990 (ISOFORM 3)</scope>
    <scope>NUCLEOTIDE SEQUENCE [LARGE SCALE MRNA] OF 843-1990 (ISOFORM 4)</scope>
    <source>
        <tissue>Embryo</tissue>
    </source>
</reference>
<reference key="4">
    <citation type="submission" date="2000-05" db="EMBL/GenBank/DDBJ databases">
        <authorList>
            <person name="Dahllund L."/>
            <person name="Sjodin J."/>
            <person name="Wikstrom L."/>
        </authorList>
    </citation>
    <scope>NUCLEOTIDE SEQUENCE [MRNA] OF 869-1990 (ISOFORM 2)</scope>
</reference>
<reference key="5">
    <citation type="journal article" date="1999" name="DNA Res.">
        <title>Characterization of cDNA clones selected by the GeneMark analysis from size-fractionated cDNA libraries from human brain.</title>
        <authorList>
            <person name="Hirosawa M."/>
            <person name="Nagase T."/>
            <person name="Ishikawa K."/>
            <person name="Kikuno R."/>
            <person name="Nomura N."/>
            <person name="Ohara O."/>
        </authorList>
    </citation>
    <scope>NUCLEOTIDE SEQUENCE [LARGE SCALE MRNA] OF 1448-1990 (ISOFORMS 1/2)</scope>
    <source>
        <tissue>Brain</tissue>
    </source>
</reference>
<reference key="6">
    <citation type="journal article" date="2004" name="Anal. Chem.">
        <title>Robust phosphoproteomic profiling of tyrosine phosphorylation sites from human T cells using immobilized metal affinity chromatography and tandem mass spectrometry.</title>
        <authorList>
            <person name="Brill L.M."/>
            <person name="Salomon A.R."/>
            <person name="Ficarro S.B."/>
            <person name="Mukherji M."/>
            <person name="Stettler-Gill M."/>
            <person name="Peters E.C."/>
        </authorList>
    </citation>
    <scope>PHOSPHORYLATION [LARGE SCALE ANALYSIS] AT SER-1442</scope>
    <scope>IDENTIFICATION BY MASS SPECTROMETRY [LARGE SCALE ANALYSIS]</scope>
    <source>
        <tissue>Leukemic T-cell</tissue>
    </source>
</reference>
<reference key="7">
    <citation type="journal article" date="2006" name="Cell">
        <title>Global, in vivo, and site-specific phosphorylation dynamics in signaling networks.</title>
        <authorList>
            <person name="Olsen J.V."/>
            <person name="Blagoev B."/>
            <person name="Gnad F."/>
            <person name="Macek B."/>
            <person name="Kumar C."/>
            <person name="Mortensen P."/>
            <person name="Mann M."/>
        </authorList>
    </citation>
    <scope>IDENTIFICATION BY MASS SPECTROMETRY [LARGE SCALE ANALYSIS]</scope>
    <source>
        <tissue>Cervix carcinoma</tissue>
    </source>
</reference>
<reference key="8">
    <citation type="journal article" date="2008" name="J. Proteome Res.">
        <title>Combining protein-based IMAC, peptide-based IMAC, and MudPIT for efficient phosphoproteomic analysis.</title>
        <authorList>
            <person name="Cantin G.T."/>
            <person name="Yi W."/>
            <person name="Lu B."/>
            <person name="Park S.K."/>
            <person name="Xu T."/>
            <person name="Lee J.-D."/>
            <person name="Yates J.R. III"/>
        </authorList>
    </citation>
    <scope>IDENTIFICATION BY MASS SPECTROMETRY [LARGE SCALE ANALYSIS]</scope>
    <source>
        <tissue>Cervix carcinoma</tissue>
    </source>
</reference>
<reference key="9">
    <citation type="journal article" date="2008" name="Proc. Natl. Acad. Sci. U.S.A.">
        <title>A quantitative atlas of mitotic phosphorylation.</title>
        <authorList>
            <person name="Dephoure N."/>
            <person name="Zhou C."/>
            <person name="Villen J."/>
            <person name="Beausoleil S.A."/>
            <person name="Bakalarski C.E."/>
            <person name="Elledge S.J."/>
            <person name="Gygi S.P."/>
        </authorList>
    </citation>
    <scope>IDENTIFICATION BY MASS SPECTROMETRY [LARGE SCALE ANALYSIS]</scope>
    <source>
        <tissue>Cervix carcinoma</tissue>
    </source>
</reference>
<reference key="10">
    <citation type="journal article" date="2009" name="Sci. Signal.">
        <title>Quantitative phosphoproteomic analysis of T cell receptor signaling reveals system-wide modulation of protein-protein interactions.</title>
        <authorList>
            <person name="Mayya V."/>
            <person name="Lundgren D.H."/>
            <person name="Hwang S.-I."/>
            <person name="Rezaul K."/>
            <person name="Wu L."/>
            <person name="Eng J.K."/>
            <person name="Rodionov V."/>
            <person name="Han D.K."/>
        </authorList>
    </citation>
    <scope>IDENTIFICATION BY MASS SPECTROMETRY [LARGE SCALE ANALYSIS]</scope>
    <source>
        <tissue>Leukemic T-cell</tissue>
    </source>
</reference>
<reference key="11">
    <citation type="journal article" date="2010" name="Sci. Signal.">
        <title>Quantitative phosphoproteomics reveals widespread full phosphorylation site occupancy during mitosis.</title>
        <authorList>
            <person name="Olsen J.V."/>
            <person name="Vermeulen M."/>
            <person name="Santamaria A."/>
            <person name="Kumar C."/>
            <person name="Miller M.L."/>
            <person name="Jensen L.J."/>
            <person name="Gnad F."/>
            <person name="Cox J."/>
            <person name="Jensen T.S."/>
            <person name="Nigg E.A."/>
            <person name="Brunak S."/>
            <person name="Mann M."/>
        </authorList>
    </citation>
    <scope>IDENTIFICATION BY MASS SPECTROMETRY [LARGE SCALE ANALYSIS]</scope>
    <source>
        <tissue>Cervix carcinoma</tissue>
    </source>
</reference>
<reference key="12">
    <citation type="journal article" date="2013" name="J. Proteome Res.">
        <title>Toward a comprehensive characterization of a human cancer cell phosphoproteome.</title>
        <authorList>
            <person name="Zhou H."/>
            <person name="Di Palma S."/>
            <person name="Preisinger C."/>
            <person name="Peng M."/>
            <person name="Polat A.N."/>
            <person name="Heck A.J."/>
            <person name="Mohammed S."/>
        </authorList>
    </citation>
    <scope>PHOSPHORYLATION [LARGE SCALE ANALYSIS] AT SER-169; SER-238; SER-294; SER-400; SER-1458; SER-1530; SER-1545; SER-1579; SER-1722 AND SER-1827</scope>
    <scope>IDENTIFICATION BY MASS SPECTROMETRY [LARGE SCALE ANALYSIS]</scope>
    <source>
        <tissue>Cervix carcinoma</tissue>
        <tissue>Erythroleukemia</tissue>
    </source>
</reference>
<reference key="13">
    <citation type="journal article" date="2012" name="N. Engl. J. Med.">
        <title>Diagnostic exome sequencing in persons with severe intellectual disability.</title>
        <authorList>
            <person name="de Ligt J."/>
            <person name="Willemsen M.H."/>
            <person name="van Bon B.W."/>
            <person name="Kleefstra T."/>
            <person name="Yntema H.G."/>
            <person name="Kroes T."/>
            <person name="Vulto-van Silfhout A.T."/>
            <person name="Koolen D.A."/>
            <person name="de Vries P."/>
            <person name="Gilissen C."/>
            <person name="del Rosario M."/>
            <person name="Hoischen A."/>
            <person name="Scheffer H."/>
            <person name="de Vries B.B."/>
            <person name="Brunner H.G."/>
            <person name="Veltman J.A."/>
            <person name="Vissers L.E."/>
        </authorList>
    </citation>
    <scope>VARIANT IDDALDS CYS-760</scope>
</reference>
<reference key="14">
    <citation type="journal article" date="2017" name="Hum. Mutat.">
        <title>A recurrent de novo mutation in ACTG1 causes isolated ocular coloboma.</title>
        <authorList>
            <consortium name="UK10K"/>
            <person name="Rainger J."/>
            <person name="Williamson K.A."/>
            <person name="Soares D.C."/>
            <person name="Truch J."/>
            <person name="Kurian D."/>
            <person name="Gillessen-Kaesbach G."/>
            <person name="Seawright A."/>
            <person name="Prendergast J."/>
            <person name="Halachev M."/>
            <person name="Wheeler A."/>
            <person name="McTeir L."/>
            <person name="Gill A.C."/>
            <person name="van Heyningen V."/>
            <person name="Davey M.G."/>
            <person name="FitzPatrick D.R."/>
        </authorList>
    </citation>
    <scope>VARIANT VAL-1280</scope>
</reference>
<reference key="15">
    <citation type="journal article" date="2018" name="Cell Rep.">
        <title>Regulation of KIF1A-Driven Dense Core Vesicle Transport: Ca2+/CaM Controls DCV Binding and Liprin-alpha/TANC2 Recruits DCVs to Postsynaptic Sites.</title>
        <authorList>
            <person name="Stucchi R."/>
            <person name="Plucinska G."/>
            <person name="Hummel J.J.A."/>
            <person name="Zahavi E.E."/>
            <person name="Guerra San Juan I."/>
            <person name="Klykov O."/>
            <person name="Scheltema R.A."/>
            <person name="Altelaar A.F.M."/>
            <person name="Hoogenraad C.C."/>
        </authorList>
    </citation>
    <scope>CHARACTERIZATION OF VARIANTS IDDALDS CYS-760 AND 1066-ARG--VAL-1990 DEL</scope>
    <scope>INTERACTION WITH KIF1A</scope>
    <scope>SUBCELLULAR LOCATION</scope>
    <scope>FUNCTION</scope>
</reference>
<reference key="16">
    <citation type="journal article" date="2019" name="Nat. Commun.">
        <title>Disruptive mutations in TANC2 define a neurodevelopmental syndrome associated with psychiatric disorders.</title>
        <authorList>
            <consortium name="University of Washington Center for Mendelian Genomics"/>
            <person name="Guo H."/>
            <person name="Bettella E."/>
            <person name="Marcogliese P.C."/>
            <person name="Zhao R."/>
            <person name="Andrews J.C."/>
            <person name="Nowakowski T.J."/>
            <person name="Gillentine M.A."/>
            <person name="Hoekzema K."/>
            <person name="Wang T."/>
            <person name="Wu H."/>
            <person name="Jangam S."/>
            <person name="Liu C."/>
            <person name="Ni H."/>
            <person name="Willemsen M.H."/>
            <person name="van Bon B.W."/>
            <person name="Rinne T."/>
            <person name="Stevens S.J.C."/>
            <person name="Kleefstra T."/>
            <person name="Brunner H.G."/>
            <person name="Yntema H.G."/>
            <person name="Long M."/>
            <person name="Zhao W."/>
            <person name="Hu Z."/>
            <person name="Colson C."/>
            <person name="Richard N."/>
            <person name="Schwartz C.E."/>
            <person name="Romano C."/>
            <person name="Castiglia L."/>
            <person name="Bottitta M."/>
            <person name="Dhar S.U."/>
            <person name="Erwin D.J."/>
            <person name="Emrick L."/>
            <person name="Keren B."/>
            <person name="Afenjar A."/>
            <person name="Zhu B."/>
            <person name="Bai B."/>
            <person name="Stankiewicz P."/>
            <person name="Herman K."/>
            <person name="Mercimek-Andrews S."/>
            <person name="Juusola J."/>
            <person name="Wilfert A.B."/>
            <person name="Abou Jamra R."/>
            <person name="Buettner B."/>
            <person name="Mefford H.C."/>
            <person name="Muir A.M."/>
            <person name="Scheffer I.E."/>
            <person name="Regan B.M."/>
            <person name="Malone S."/>
            <person name="Gecz J."/>
            <person name="Cobben J."/>
            <person name="Weiss M.M."/>
            <person name="Waisfisz Q."/>
            <person name="Bijlsma E.K."/>
            <person name="Hoffer M.J.V."/>
            <person name="Ruivenkamp C.A.L."/>
            <person name="Sartori S."/>
            <person name="Xia F."/>
            <person name="Rosenfeld J.A."/>
            <person name="Bernier R.A."/>
            <person name="Wangler M.F."/>
            <person name="Yamamoto S."/>
            <person name="Xia K."/>
            <person name="Stegmann A.P.A."/>
            <person name="Bellen H.J."/>
            <person name="Murgia A."/>
            <person name="Eichler E.E."/>
        </authorList>
    </citation>
    <scope>INVOLVEMENT IN IDDALDS</scope>
    <scope>VARIANTS IDDALDS HIS-755; CYS-760; VAL-794; GLN-961; 1066-ARG--VAL-1990 DEL; 1400-GLN--VAL-1990 DEL; 1483-GLN--VAL-1990 DEL AND ARG-1689</scope>
</reference>
<feature type="chain" id="PRO_0000333811" description="Protein TANC2">
    <location>
        <begin position="1"/>
        <end position="1990"/>
    </location>
</feature>
<feature type="repeat" description="ANK 1">
    <location>
        <begin position="846"/>
        <end position="878"/>
    </location>
</feature>
<feature type="repeat" description="ANK 2">
    <location>
        <begin position="884"/>
        <end position="913"/>
    </location>
</feature>
<feature type="repeat" description="ANK 3">
    <location>
        <begin position="917"/>
        <end position="946"/>
    </location>
</feature>
<feature type="repeat" description="ANK 4">
    <location>
        <begin position="950"/>
        <end position="979"/>
    </location>
</feature>
<feature type="repeat" description="ANK 5">
    <location>
        <begin position="990"/>
        <end position="1019"/>
    </location>
</feature>
<feature type="repeat" description="ANK 6">
    <location>
        <begin position="1033"/>
        <end position="1062"/>
    </location>
</feature>
<feature type="repeat" description="ANK 7">
    <location>
        <begin position="1066"/>
        <end position="1095"/>
    </location>
</feature>
<feature type="repeat" description="ANK 8">
    <location>
        <begin position="1099"/>
        <end position="1128"/>
    </location>
</feature>
<feature type="repeat" description="ANK 9">
    <location>
        <begin position="1132"/>
        <end position="1161"/>
    </location>
</feature>
<feature type="repeat" description="ANK 10">
    <location>
        <begin position="1165"/>
        <end position="1194"/>
    </location>
</feature>
<feature type="repeat" description="ANK 11">
    <location>
        <begin position="1198"/>
        <end position="1227"/>
    </location>
</feature>
<feature type="repeat" description="TPR 1">
    <location>
        <begin position="1244"/>
        <end position="1277"/>
    </location>
</feature>
<feature type="repeat" description="TPR 2">
    <location>
        <begin position="1291"/>
        <end position="1324"/>
    </location>
</feature>
<feature type="repeat" description="TPR 3">
    <location>
        <begin position="1325"/>
        <end position="1358"/>
    </location>
</feature>
<feature type="region of interest" description="Disordered" evidence="2">
    <location>
        <begin position="1"/>
        <end position="85"/>
    </location>
</feature>
<feature type="region of interest" description="Disordered" evidence="2">
    <location>
        <begin position="129"/>
        <end position="149"/>
    </location>
</feature>
<feature type="region of interest" description="Disordered" evidence="2">
    <location>
        <begin position="396"/>
        <end position="442"/>
    </location>
</feature>
<feature type="region of interest" description="Disordered" evidence="2">
    <location>
        <begin position="1372"/>
        <end position="1401"/>
    </location>
</feature>
<feature type="region of interest" description="Disordered" evidence="2">
    <location>
        <begin position="1430"/>
        <end position="1586"/>
    </location>
</feature>
<feature type="region of interest" description="Disordered" evidence="2">
    <location>
        <begin position="1692"/>
        <end position="1718"/>
    </location>
</feature>
<feature type="region of interest" description="Disordered" evidence="2">
    <location>
        <begin position="1783"/>
        <end position="1803"/>
    </location>
</feature>
<feature type="region of interest" description="Disordered" evidence="2">
    <location>
        <begin position="1821"/>
        <end position="1843"/>
    </location>
</feature>
<feature type="region of interest" description="Disordered" evidence="2">
    <location>
        <begin position="1968"/>
        <end position="1990"/>
    </location>
</feature>
<feature type="compositionally biased region" description="Polar residues" evidence="2">
    <location>
        <begin position="419"/>
        <end position="431"/>
    </location>
</feature>
<feature type="compositionally biased region" description="Polar residues" evidence="2">
    <location>
        <begin position="1469"/>
        <end position="1498"/>
    </location>
</feature>
<feature type="compositionally biased region" description="Polar residues" evidence="2">
    <location>
        <begin position="1553"/>
        <end position="1572"/>
    </location>
</feature>
<feature type="compositionally biased region" description="Low complexity" evidence="2">
    <location>
        <begin position="1783"/>
        <end position="1798"/>
    </location>
</feature>
<feature type="modified residue" description="Phosphoserine" evidence="11">
    <location>
        <position position="169"/>
    </location>
</feature>
<feature type="modified residue" description="Phosphoserine" evidence="11">
    <location>
        <position position="238"/>
    </location>
</feature>
<feature type="modified residue" description="Phosphoserine" evidence="11">
    <location>
        <position position="294"/>
    </location>
</feature>
<feature type="modified residue" description="Phosphoserine" evidence="11">
    <location>
        <position position="400"/>
    </location>
</feature>
<feature type="modified residue" description="Phosphoserine" evidence="10">
    <location>
        <position position="1442"/>
    </location>
</feature>
<feature type="modified residue" description="Phosphoserine" evidence="11">
    <location>
        <position position="1458"/>
    </location>
</feature>
<feature type="modified residue" description="Phosphoserine" evidence="11">
    <location>
        <position position="1530"/>
    </location>
</feature>
<feature type="modified residue" description="Phosphoserine" evidence="11">
    <location>
        <position position="1545"/>
    </location>
</feature>
<feature type="modified residue" description="Asymmetric dimethylarginine" evidence="1">
    <location>
        <position position="1563"/>
    </location>
</feature>
<feature type="modified residue" description="Asymmetric dimethylarginine" evidence="1">
    <location>
        <position position="1576"/>
    </location>
</feature>
<feature type="modified residue" description="Phosphoserine" evidence="11">
    <location>
        <position position="1579"/>
    </location>
</feature>
<feature type="modified residue" description="Phosphoserine" evidence="11">
    <location>
        <position position="1722"/>
    </location>
</feature>
<feature type="modified residue" description="Phosphoserine" evidence="1">
    <location>
        <position position="1824"/>
    </location>
</feature>
<feature type="modified residue" description="Phosphoserine" evidence="11">
    <location>
        <position position="1827"/>
    </location>
</feature>
<feature type="glycosylation site" description="N-linked (GlcNAc...) asparagine" evidence="1">
    <location>
        <position position="1928"/>
    </location>
</feature>
<feature type="splice variant" id="VSP_033546" description="In isoform 3." evidence="7">
    <original>VDHLDKNGQCALVHAALRGHLEVVKFLI</original>
    <variation>VLAAQLCCFSSLFLYFRCILFLISSVTS</variation>
    <location>
        <begin position="944"/>
        <end position="971"/>
    </location>
</feature>
<feature type="splice variant" id="VSP_033547" description="In isoform 3." evidence="7">
    <location>
        <begin position="972"/>
        <end position="1990"/>
    </location>
</feature>
<feature type="splice variant" id="VSP_033548" description="In isoform 4." evidence="7">
    <original>IVSYL</original>
    <variation>VRSRQ</variation>
    <location>
        <begin position="1006"/>
        <end position="1010"/>
    </location>
</feature>
<feature type="splice variant" id="VSP_033549" description="In isoform 4." evidence="7">
    <location>
        <begin position="1011"/>
        <end position="1990"/>
    </location>
</feature>
<feature type="splice variant" id="VSP_033550" description="In isoform 2." evidence="8">
    <original>I</original>
    <variation>IGCQTLPSRPR</variation>
    <location>
        <position position="1225"/>
    </location>
</feature>
<feature type="sequence variant" id="VAR_084328" description="In IDDALDS; uncertain significance; dbSNP:rs775421108." evidence="6">
    <original>R</original>
    <variation>H</variation>
    <location>
        <position position="755"/>
    </location>
</feature>
<feature type="sequence variant" id="VAR_069374" description="In IDDALDS; reduced interaction with KIF1A; impaired neuronal dense core vesicles transport; no effect on dendritic spine location; dbSNP:rs1282488329." evidence="3 5 6">
    <original>R</original>
    <variation>C</variation>
    <location>
        <position position="760"/>
    </location>
</feature>
<feature type="sequence variant" id="VAR_084329" description="In IDDALDS; uncertain significance; dbSNP:rs2047545401." evidence="6">
    <original>A</original>
    <variation>V</variation>
    <location>
        <position position="794"/>
    </location>
</feature>
<feature type="sequence variant" id="VAR_084330" description="In IDDALDS; uncertain significance; dbSNP:rs374131489." evidence="6">
    <original>R</original>
    <variation>Q</variation>
    <location>
        <position position="961"/>
    </location>
</feature>
<feature type="sequence variant" id="VAR_084331" description="In IDDALDS; strongly reduced interaction with KIF1A; strongly reduced localization at the dendritic spine." evidence="5 6">
    <location>
        <begin position="1066"/>
        <end position="1990"/>
    </location>
</feature>
<feature type="sequence variant" id="VAR_079853" description="Found in a patient with isolated coloboma; uncertain significance." evidence="4">
    <original>G</original>
    <variation>V</variation>
    <location>
        <position position="1280"/>
    </location>
</feature>
<feature type="sequence variant" id="VAR_084332" description="In IDDALDS." evidence="6">
    <location>
        <begin position="1400"/>
        <end position="1990"/>
    </location>
</feature>
<feature type="sequence variant" id="VAR_084333" description="In IDDALDS." evidence="6">
    <location>
        <begin position="1483"/>
        <end position="1990"/>
    </location>
</feature>
<feature type="sequence variant" id="VAR_084334" description="In IDDALDS; uncertain significance; dbSNP:rs2049010059." evidence="6">
    <original>H</original>
    <variation>R</variation>
    <location>
        <position position="1689"/>
    </location>
</feature>
<feature type="sequence conflict" description="In Ref. 4; CAB92314." evidence="9" ref="4">
    <original>R</original>
    <variation>P</variation>
    <location>
        <position position="1210"/>
    </location>
</feature>
<feature type="sequence conflict" description="In Ref. 4; CAB92314." evidence="9" ref="4">
    <original>T</original>
    <variation>P</variation>
    <location>
        <position position="1234"/>
    </location>
</feature>
<feature type="sequence conflict" description="In Ref. 4; CAB92314." evidence="9" ref="4">
    <original>E</original>
    <variation>K</variation>
    <location>
        <position position="1249"/>
    </location>
</feature>
<feature type="sequence conflict" description="In Ref. 4; CAB92314." evidence="9" ref="4">
    <original>T</original>
    <variation>P</variation>
    <location>
        <position position="1285"/>
    </location>
</feature>
<accession>Q9HCD6</accession>
<accession>Q9HAC3</accession>
<accession>Q9NW88</accession>
<accession>Q9NXY9</accession>
<accession>Q9ULS2</accession>
<gene>
    <name type="primary">TANC2</name>
    <name type="synonym">KIAA1148</name>
    <name type="synonym">KIAA1636</name>
</gene>
<protein>
    <recommendedName>
        <fullName>Protein TANC2</fullName>
    </recommendedName>
    <alternativeName>
        <fullName>Tetratricopeptide repeat, ankyrin repeat and coiled-coil domain-containing protein 2</fullName>
    </alternativeName>
</protein>
<proteinExistence type="evidence at protein level"/>